<evidence type="ECO:0000255" key="1">
    <source>
        <dbReference type="HAMAP-Rule" id="MF_00489"/>
    </source>
</evidence>
<proteinExistence type="inferred from homology"/>
<dbReference type="EMBL" id="CP000113">
    <property type="protein sequence ID" value="ABF88246.1"/>
    <property type="molecule type" value="Genomic_DNA"/>
</dbReference>
<dbReference type="RefSeq" id="WP_011555484.1">
    <property type="nucleotide sequence ID" value="NC_008095.1"/>
</dbReference>
<dbReference type="SMR" id="Q1D104"/>
<dbReference type="EnsemblBacteria" id="ABF88246">
    <property type="protein sequence ID" value="ABF88246"/>
    <property type="gene ID" value="MXAN_5526"/>
</dbReference>
<dbReference type="GeneID" id="41362779"/>
<dbReference type="KEGG" id="mxa:MXAN_5526"/>
<dbReference type="eggNOG" id="COG1671">
    <property type="taxonomic scope" value="Bacteria"/>
</dbReference>
<dbReference type="HOGENOM" id="CLU_106619_2_1_7"/>
<dbReference type="OrthoDB" id="9798918at2"/>
<dbReference type="Proteomes" id="UP000002402">
    <property type="component" value="Chromosome"/>
</dbReference>
<dbReference type="CDD" id="cd18720">
    <property type="entry name" value="PIN_YqxD-like"/>
    <property type="match status" value="1"/>
</dbReference>
<dbReference type="HAMAP" id="MF_00489">
    <property type="entry name" value="UPF0178"/>
    <property type="match status" value="1"/>
</dbReference>
<dbReference type="InterPro" id="IPR003791">
    <property type="entry name" value="UPF0178"/>
</dbReference>
<dbReference type="NCBIfam" id="NF001095">
    <property type="entry name" value="PRK00124.1"/>
    <property type="match status" value="1"/>
</dbReference>
<dbReference type="PANTHER" id="PTHR35146">
    <property type="entry name" value="UPF0178 PROTEIN YAII"/>
    <property type="match status" value="1"/>
</dbReference>
<dbReference type="PANTHER" id="PTHR35146:SF1">
    <property type="entry name" value="UPF0178 PROTEIN YAII"/>
    <property type="match status" value="1"/>
</dbReference>
<dbReference type="Pfam" id="PF02639">
    <property type="entry name" value="DUF188"/>
    <property type="match status" value="1"/>
</dbReference>
<organism>
    <name type="scientific">Myxococcus xanthus (strain DK1622)</name>
    <dbReference type="NCBI Taxonomy" id="246197"/>
    <lineage>
        <taxon>Bacteria</taxon>
        <taxon>Pseudomonadati</taxon>
        <taxon>Myxococcota</taxon>
        <taxon>Myxococcia</taxon>
        <taxon>Myxococcales</taxon>
        <taxon>Cystobacterineae</taxon>
        <taxon>Myxococcaceae</taxon>
        <taxon>Myxococcus</taxon>
    </lineage>
</organism>
<gene>
    <name type="ordered locus">MXAN_5526</name>
</gene>
<protein>
    <recommendedName>
        <fullName evidence="1">UPF0178 protein MXAN_5526</fullName>
    </recommendedName>
</protein>
<reference key="1">
    <citation type="journal article" date="2006" name="Proc. Natl. Acad. Sci. U.S.A.">
        <title>Evolution of sensory complexity recorded in a myxobacterial genome.</title>
        <authorList>
            <person name="Goldman B.S."/>
            <person name="Nierman W.C."/>
            <person name="Kaiser D."/>
            <person name="Slater S.C."/>
            <person name="Durkin A.S."/>
            <person name="Eisen J.A."/>
            <person name="Ronning C.M."/>
            <person name="Barbazuk W.B."/>
            <person name="Blanchard M."/>
            <person name="Field C."/>
            <person name="Halling C."/>
            <person name="Hinkle G."/>
            <person name="Iartchuk O."/>
            <person name="Kim H.S."/>
            <person name="Mackenzie C."/>
            <person name="Madupu R."/>
            <person name="Miller N."/>
            <person name="Shvartsbeyn A."/>
            <person name="Sullivan S.A."/>
            <person name="Vaudin M."/>
            <person name="Wiegand R."/>
            <person name="Kaplan H.B."/>
        </authorList>
    </citation>
    <scope>NUCLEOTIDE SEQUENCE [LARGE SCALE GENOMIC DNA]</scope>
    <source>
        <strain>DK1622</strain>
    </source>
</reference>
<sequence>MKIWVDADACPGPVRDIILRAGQRVKVHTVFVANHALSLPRLAYVSSVQVGAGLDVADRHIAQQAQPGDLAVTQDIPLAALLVPKGVVVLDPRGEVFTEENVAERLSVRNFMQELRESGVTTGGPDGYSAQDRQQFAGALDRELTRLVKTEPK</sequence>
<accession>Q1D104</accession>
<keyword id="KW-1185">Reference proteome</keyword>
<name>Y5526_MYXXD</name>
<feature type="chain" id="PRO_1000014427" description="UPF0178 protein MXAN_5526">
    <location>
        <begin position="1"/>
        <end position="153"/>
    </location>
</feature>
<comment type="similarity">
    <text evidence="1">Belongs to the UPF0178 family.</text>
</comment>